<sequence>MWPPSHRQLCLAFLLVCVLSVISFFLHIHQDSFPHGLGLSILCPDRGLVTPPVAIFCLPGTAMGPNASSSCPQHPASLSGTWTVYPNGRFGNQMGQYATLLALAQLNGRRAFILPAMHAALAPVFRITLPVLAPEADSRTPWRELQLHDWMSEEYADLRDPFLKLSGFPCSWTFFHHLREQIRREFTLHDHLREEAQSVLGQLRLGRTGDRPRTFVGVHVRRGDYLQVMPQRWKGVVGDSAYLRQAMDWFRARHEAPVFVVTSNGMEWCKENIDTSQGDVTFAGDGQEATPWKDFALLTQCNHTIMTIGTFGFWAAYLAGGDTVYLANFTLPDSEFLKIFKPEAAFLPEWVGINADLSSLWTLAKP</sequence>
<dbReference type="EC" id="2.4.1.69" evidence="2"/>
<dbReference type="EC" id="2.4.1.344" evidence="3"/>
<dbReference type="EMBL" id="AF080603">
    <property type="protein sequence ID" value="AAF14065.1"/>
    <property type="molecule type" value="Genomic_DNA"/>
</dbReference>
<dbReference type="RefSeq" id="NP_001009121.1">
    <property type="nucleotide sequence ID" value="NM_001009121.1"/>
</dbReference>
<dbReference type="SMR" id="Q9TUD6"/>
<dbReference type="FunCoup" id="Q9TUD6">
    <property type="interactions" value="229"/>
</dbReference>
<dbReference type="STRING" id="9598.ENSPTRP00000081904"/>
<dbReference type="CAZy" id="GT11">
    <property type="family name" value="Glycosyltransferase Family 11"/>
</dbReference>
<dbReference type="GlyCosmos" id="Q9TUD6">
    <property type="glycosylation" value="3 sites, No reported glycans"/>
</dbReference>
<dbReference type="PaxDb" id="9598-ENSPTRP00000019304"/>
<dbReference type="GeneID" id="468947"/>
<dbReference type="CTD" id="2523"/>
<dbReference type="eggNOG" id="ENOG502S316">
    <property type="taxonomic scope" value="Eukaryota"/>
</dbReference>
<dbReference type="InParanoid" id="Q9TUD6"/>
<dbReference type="BRENDA" id="2.4.1.69">
    <property type="organism ID" value="4497"/>
</dbReference>
<dbReference type="UniPathway" id="UPA00378"/>
<dbReference type="Proteomes" id="UP000002277">
    <property type="component" value="Unplaced"/>
</dbReference>
<dbReference type="GO" id="GO:0032580">
    <property type="term" value="C:Golgi cisterna membrane"/>
    <property type="evidence" value="ECO:0007669"/>
    <property type="project" value="UniProtKB-SubCell"/>
</dbReference>
<dbReference type="GO" id="GO:0031127">
    <property type="term" value="F:alpha-(1,2)-fucosyltransferase activity"/>
    <property type="evidence" value="ECO:0000250"/>
    <property type="project" value="UniProtKB"/>
</dbReference>
<dbReference type="GO" id="GO:0008107">
    <property type="term" value="F:galactoside 2-alpha-L-fucosyltransferase activity"/>
    <property type="evidence" value="ECO:0000318"/>
    <property type="project" value="GO_Central"/>
</dbReference>
<dbReference type="GO" id="GO:0005975">
    <property type="term" value="P:carbohydrate metabolic process"/>
    <property type="evidence" value="ECO:0007669"/>
    <property type="project" value="InterPro"/>
</dbReference>
<dbReference type="GO" id="GO:0036065">
    <property type="term" value="P:fucosylation"/>
    <property type="evidence" value="ECO:0000250"/>
    <property type="project" value="UniProtKB"/>
</dbReference>
<dbReference type="GO" id="GO:0006629">
    <property type="term" value="P:lipid metabolic process"/>
    <property type="evidence" value="ECO:0007669"/>
    <property type="project" value="UniProtKB-KW"/>
</dbReference>
<dbReference type="GO" id="GO:0021772">
    <property type="term" value="P:olfactory bulb development"/>
    <property type="evidence" value="ECO:0000250"/>
    <property type="project" value="UniProtKB"/>
</dbReference>
<dbReference type="GO" id="GO:0001954">
    <property type="term" value="P:positive regulation of cell-matrix adhesion"/>
    <property type="evidence" value="ECO:0000250"/>
    <property type="project" value="UniProtKB"/>
</dbReference>
<dbReference type="GO" id="GO:0010595">
    <property type="term" value="P:positive regulation of endothelial cell migration"/>
    <property type="evidence" value="ECO:0000250"/>
    <property type="project" value="UniProtKB"/>
</dbReference>
<dbReference type="GO" id="GO:1904906">
    <property type="term" value="P:positive regulation of endothelial cell-matrix adhesion via fibronectin"/>
    <property type="evidence" value="ECO:0000250"/>
    <property type="project" value="UniProtKB"/>
</dbReference>
<dbReference type="GO" id="GO:1903672">
    <property type="term" value="P:positive regulation of sprouting angiogenesis"/>
    <property type="evidence" value="ECO:0000250"/>
    <property type="project" value="UniProtKB"/>
</dbReference>
<dbReference type="GO" id="GO:0006486">
    <property type="term" value="P:protein glycosylation"/>
    <property type="evidence" value="ECO:0000250"/>
    <property type="project" value="UniProtKB"/>
</dbReference>
<dbReference type="GO" id="GO:0030155">
    <property type="term" value="P:regulation of cell adhesion"/>
    <property type="evidence" value="ECO:0000250"/>
    <property type="project" value="UniProtKB"/>
</dbReference>
<dbReference type="GO" id="GO:0001936">
    <property type="term" value="P:regulation of endothelial cell proliferation"/>
    <property type="evidence" value="ECO:0000250"/>
    <property type="project" value="UniProtKB"/>
</dbReference>
<dbReference type="CDD" id="cd11301">
    <property type="entry name" value="Fut1_Fut2_like"/>
    <property type="match status" value="1"/>
</dbReference>
<dbReference type="InterPro" id="IPR002516">
    <property type="entry name" value="Glyco_trans_11"/>
</dbReference>
<dbReference type="PANTHER" id="PTHR11927">
    <property type="entry name" value="GALACTOSIDE 2-L-FUCOSYLTRANSFERASE"/>
    <property type="match status" value="1"/>
</dbReference>
<dbReference type="PANTHER" id="PTHR11927:SF4">
    <property type="entry name" value="GALACTOSIDE ALPHA-(1,2)-FUCOSYLTRANSFERASE 1"/>
    <property type="match status" value="1"/>
</dbReference>
<dbReference type="Pfam" id="PF01531">
    <property type="entry name" value="Glyco_transf_11"/>
    <property type="match status" value="1"/>
</dbReference>
<protein>
    <recommendedName>
        <fullName evidence="3">Galactoside alpha-(1,2)-fucosyltransferase 1</fullName>
    </recommendedName>
    <alternativeName>
        <fullName>Alpha(1,2)FT 1</fullName>
    </alternativeName>
    <alternativeName>
        <fullName>Fucosyltransferase 1</fullName>
    </alternativeName>
    <alternativeName>
        <fullName>GDP-L-fucose:beta-D-galactoside 2-alpha-L-fucosyltransferase 1</fullName>
    </alternativeName>
    <alternativeName>
        <fullName evidence="2">Type 1 galactoside alpha-(1,2)-fucosyltransferase FUT1</fullName>
        <ecNumber evidence="2">2.4.1.69</ecNumber>
    </alternativeName>
    <alternativeName>
        <fullName evidence="3">Type 2 galactoside alpha-(1,2)-fucosyltransferase FUT1</fullName>
        <ecNumber evidence="3">2.4.1.344</ecNumber>
    </alternativeName>
</protein>
<accession>Q9TUD6</accession>
<feature type="chain" id="PRO_0000149099" description="Galactoside alpha-(1,2)-fucosyltransferase 1">
    <location>
        <begin position="1"/>
        <end position="366"/>
    </location>
</feature>
<feature type="topological domain" description="Cytoplasmic" evidence="4">
    <location>
        <begin position="1"/>
        <end position="8"/>
    </location>
</feature>
<feature type="transmembrane region" description="Helical; Signal-anchor for type II membrane protein" evidence="4">
    <location>
        <begin position="9"/>
        <end position="25"/>
    </location>
</feature>
<feature type="topological domain" description="Lumenal" evidence="4">
    <location>
        <begin position="26"/>
        <end position="366"/>
    </location>
</feature>
<feature type="glycosylation site" description="N-linked (GlcNAc...) asparagine" evidence="4">
    <location>
        <position position="66"/>
    </location>
</feature>
<feature type="glycosylation site" description="N-linked (GlcNAc...) asparagine" evidence="4">
    <location>
        <position position="302"/>
    </location>
</feature>
<feature type="glycosylation site" description="N-linked (GlcNAc...) asparagine" evidence="4">
    <location>
        <position position="328"/>
    </location>
</feature>
<proteinExistence type="inferred from homology"/>
<organism>
    <name type="scientific">Pan troglodytes</name>
    <name type="common">Chimpanzee</name>
    <dbReference type="NCBI Taxonomy" id="9598"/>
    <lineage>
        <taxon>Eukaryota</taxon>
        <taxon>Metazoa</taxon>
        <taxon>Chordata</taxon>
        <taxon>Craniata</taxon>
        <taxon>Vertebrata</taxon>
        <taxon>Euteleostomi</taxon>
        <taxon>Mammalia</taxon>
        <taxon>Eutheria</taxon>
        <taxon>Euarchontoglires</taxon>
        <taxon>Primates</taxon>
        <taxon>Haplorrhini</taxon>
        <taxon>Catarrhini</taxon>
        <taxon>Hominidae</taxon>
        <taxon>Pan</taxon>
    </lineage>
</organism>
<evidence type="ECO:0000250" key="1">
    <source>
        <dbReference type="UniProtKB" id="F6Q1T7"/>
    </source>
</evidence>
<evidence type="ECO:0000250" key="2">
    <source>
        <dbReference type="UniProtKB" id="O09160"/>
    </source>
</evidence>
<evidence type="ECO:0000250" key="3">
    <source>
        <dbReference type="UniProtKB" id="P19526"/>
    </source>
</evidence>
<evidence type="ECO:0000255" key="4"/>
<evidence type="ECO:0000305" key="5"/>
<comment type="function">
    <text evidence="2 3">Catalyzes the transfer of L-fucose, from a guanosine diphosphate-beta-L-fucose, to the terminal galactose residue of glycoconjugates through an alpha(1,2) linkage leading to H antigen synthesis that is an intermediate substrate in the synthesis of ABO blood group antigens. H antigen is essential for maturation of the glomerular layer of the main olfactory bulb, in cell migration and early cell-cell contacts during tumor associated angiogenesis (By similarity). Preferentially fucosylates soluble lactose and to a lesser extent fucosylates glycolipids gangliosides GA1 and GM1a (By similarity).</text>
</comment>
<comment type="catalytic activity">
    <reaction evidence="3">
        <text>a beta-D-galactosyl-(1-&gt;4)-N-acetyl-beta-D-glucosaminyl derivative + GDP-beta-L-fucose = an alpha-L-Fuc-(1-&gt;2)-beta-D-Gal-(1-&gt;4)-beta-D-GlcNAc derivative + GDP + H(+)</text>
        <dbReference type="Rhea" id="RHEA:50668"/>
        <dbReference type="ChEBI" id="CHEBI:15378"/>
        <dbReference type="ChEBI" id="CHEBI:57273"/>
        <dbReference type="ChEBI" id="CHEBI:58189"/>
        <dbReference type="ChEBI" id="CHEBI:133507"/>
        <dbReference type="ChEBI" id="CHEBI:133510"/>
        <dbReference type="EC" id="2.4.1.344"/>
    </reaction>
</comment>
<comment type="catalytic activity">
    <reaction evidence="2">
        <text>a ganglioside GA1 + GDP-beta-L-fucose = a ganglioside Fuc-GA1 + GDP + H(+)</text>
        <dbReference type="Rhea" id="RHEA:48320"/>
        <dbReference type="ChEBI" id="CHEBI:15378"/>
        <dbReference type="ChEBI" id="CHEBI:57273"/>
        <dbReference type="ChEBI" id="CHEBI:58189"/>
        <dbReference type="ChEBI" id="CHEBI:88069"/>
        <dbReference type="ChEBI" id="CHEBI:90262"/>
    </reaction>
    <physiologicalReaction direction="left-to-right" evidence="2">
        <dbReference type="Rhea" id="RHEA:48321"/>
    </physiologicalReaction>
</comment>
<comment type="catalytic activity">
    <reaction evidence="2">
        <text>a beta-D-Gal-(1-&gt;3)-beta-D-GlcNAc-(1-&gt;3)-beta-D-Gal-(1-&gt;4)-beta-D-Glc-(1&lt;-&gt;1')-Cer(d18:1(4E)) + GDP-beta-L-fucose = alpha-L-fucosyl-(1-&gt;2)- beta-D-galactosyl-(1-&gt;3)-N-acetyl-beta-D-glucosaminyl-(1-&gt;3)-beta-D-galactosyl-(1-&gt;4)-beta-D-glucosyl-(1&lt;-&gt;1')-N-acylsphing-4-enine + GDP + H(+)</text>
        <dbReference type="Rhea" id="RHEA:32175"/>
        <dbReference type="ChEBI" id="CHEBI:15378"/>
        <dbReference type="ChEBI" id="CHEBI:17292"/>
        <dbReference type="ChEBI" id="CHEBI:28743"/>
        <dbReference type="ChEBI" id="CHEBI:57273"/>
        <dbReference type="ChEBI" id="CHEBI:58189"/>
        <dbReference type="EC" id="2.4.1.69"/>
    </reaction>
    <physiologicalReaction direction="left-to-right" evidence="2">
        <dbReference type="Rhea" id="RHEA:32176"/>
    </physiologicalReaction>
</comment>
<comment type="catalytic activity">
    <reaction evidence="2">
        <text>a neolactoside nLc4Cer(d18:1(4E)) + GDP-beta-L-fucose = a neolactoside IV(2)-alpha-Fuc-nLc4Cer(d18:1(4E)) + GDP + H(+)</text>
        <dbReference type="Rhea" id="RHEA:48304"/>
        <dbReference type="ChEBI" id="CHEBI:15378"/>
        <dbReference type="ChEBI" id="CHEBI:17006"/>
        <dbReference type="ChEBI" id="CHEBI:28691"/>
        <dbReference type="ChEBI" id="CHEBI:57273"/>
        <dbReference type="ChEBI" id="CHEBI:58189"/>
    </reaction>
    <physiologicalReaction direction="left-to-right" evidence="2">
        <dbReference type="Rhea" id="RHEA:48305"/>
    </physiologicalReaction>
</comment>
<comment type="catalytic activity">
    <reaction evidence="1">
        <text>a ganglioside GM1 + GDP-beta-L-fucose = a ganglioside Fuc-GM1 + GDP + H(+)</text>
        <dbReference type="Rhea" id="RHEA:48292"/>
        <dbReference type="ChEBI" id="CHEBI:15378"/>
        <dbReference type="ChEBI" id="CHEBI:57273"/>
        <dbReference type="ChEBI" id="CHEBI:58189"/>
        <dbReference type="ChEBI" id="CHEBI:82639"/>
        <dbReference type="ChEBI" id="CHEBI:90189"/>
    </reaction>
    <physiologicalReaction direction="left-to-right" evidence="1">
        <dbReference type="Rhea" id="RHEA:48293"/>
    </physiologicalReaction>
</comment>
<comment type="catalytic activity">
    <reaction evidence="1">
        <text>beta-D-galactosyl-(1-&gt;3)-N-acetyl-D-galactosamine + GDP-beta-L-fucose = alpha-L-fucosyl-(1-&gt;2)-beta-D-galactosyl-(1-&gt;3)-N-acetyl-D-galactosamine + GDP + H(+)</text>
        <dbReference type="Rhea" id="RHEA:62964"/>
        <dbReference type="ChEBI" id="CHEBI:15378"/>
        <dbReference type="ChEBI" id="CHEBI:57273"/>
        <dbReference type="ChEBI" id="CHEBI:58189"/>
        <dbReference type="ChEBI" id="CHEBI:84728"/>
        <dbReference type="ChEBI" id="CHEBI:546807"/>
    </reaction>
    <physiologicalReaction direction="left-to-right" evidence="1">
        <dbReference type="Rhea" id="RHEA:62965"/>
    </physiologicalReaction>
</comment>
<comment type="pathway">
    <text evidence="3">Protein modification; protein glycosylation.</text>
</comment>
<comment type="subcellular location">
    <subcellularLocation>
        <location evidence="2">Golgi apparatus</location>
        <location evidence="2">Golgi stack membrane</location>
        <topology evidence="2">Single-pass type II membrane protein</topology>
    </subcellularLocation>
    <text evidence="2">Membrane-bound form in trans cisternae of Golgi.</text>
</comment>
<comment type="similarity">
    <text evidence="5">Belongs to the glycosyltransferase 11 family.</text>
</comment>
<gene>
    <name evidence="3" type="primary">FUT1</name>
</gene>
<name>FUT1_PANTR</name>
<keyword id="KW-0325">Glycoprotein</keyword>
<keyword id="KW-0328">Glycosyltransferase</keyword>
<keyword id="KW-0333">Golgi apparatus</keyword>
<keyword id="KW-0443">Lipid metabolism</keyword>
<keyword id="KW-0472">Membrane</keyword>
<keyword id="KW-1185">Reference proteome</keyword>
<keyword id="KW-0735">Signal-anchor</keyword>
<keyword id="KW-0808">Transferase</keyword>
<keyword id="KW-0812">Transmembrane</keyword>
<keyword id="KW-1133">Transmembrane helix</keyword>
<reference key="1">
    <citation type="journal article" date="2000" name="Mol. Biol. Evol.">
        <title>Evolution of alpha 2-fucosyltransferase genes in primates: relation between an intronic Alu-Y element and red cell expression of ABH antigens.</title>
        <authorList>
            <person name="Apoil P.-A."/>
            <person name="Roubinet F."/>
            <person name="Despiau S."/>
            <person name="Mollicone R."/>
            <person name="Oriol R."/>
            <person name="Blancher A."/>
        </authorList>
    </citation>
    <scope>NUCLEOTIDE SEQUENCE [GENOMIC DNA]</scope>
    <source>
        <strain>Isolate CH16</strain>
    </source>
</reference>